<evidence type="ECO:0000255" key="1">
    <source>
        <dbReference type="HAMAP-Rule" id="MF_00028"/>
    </source>
</evidence>
<comment type="function">
    <text evidence="1">Catalyzes amidations at positions B, D, E, and G on adenosylcobyrinic A,C-diamide. NH(2) groups are provided by glutamine, and one molecule of ATP is hydrogenolyzed for each amidation.</text>
</comment>
<comment type="pathway">
    <text evidence="1">Cofactor biosynthesis; adenosylcobalamin biosynthesis.</text>
</comment>
<comment type="similarity">
    <text evidence="1">Belongs to the CobB/CobQ family. CobQ subfamily.</text>
</comment>
<accession>Q3ALJ7</accession>
<protein>
    <recommendedName>
        <fullName evidence="1">Cobyric acid synthase</fullName>
    </recommendedName>
</protein>
<name>COBQ_SYNSC</name>
<sequence length="498" mass="54484">MTGASPRPLMVLGTSSGAGKSLMTAALCRVLQRRGEQALPFKGQNMSNNAWVDADGGEMAYSQAMQAWAAGLEPCCSMNPVLLKPRGDSTSEVIHGGQSVGIARAEHYYRDWFRPGWKAIRTGLMQLQQQWPQGRLVLEGAGSPVEVNLQRRDLTNLRLAQYLRANCLLVADIERGGVFAQIVGTLSLLRPVESPLIKGILINRFRGRRELFDEGRRWLEANTGVPVLGVMPWLNELFPPEDSLDLLERKPTRGATDLEIAVLRLPSLSNFSDLDPLEAEASLRLRWIQPGEPLGEPDAVILPGSKQTLRDLEAMNSCGLADQLRAYAQAGGSVLGICGGMQMLGRSLSDPEGLEGTDQRCSQNGLGLLPLETTFSGTKRLSQRSIDGLWPMETPLSGFELHYGTTIPDAGLQPLSSDPGLGWWAPGPKGSSVVGTYLHGLLDNGPWRRAWLNRLREQRGLQPLANDPKNHSAHRDLLLDRLADAFEQHVNLAPLLQP</sequence>
<gene>
    <name evidence="1" type="primary">cobQ</name>
    <name type="ordered locus">Syncc9605_0766</name>
</gene>
<reference key="1">
    <citation type="submission" date="2005-07" db="EMBL/GenBank/DDBJ databases">
        <title>Complete sequence of Synechococcus sp. CC9605.</title>
        <authorList>
            <consortium name="US DOE Joint Genome Institute"/>
            <person name="Copeland A."/>
            <person name="Lucas S."/>
            <person name="Lapidus A."/>
            <person name="Barry K."/>
            <person name="Detter J.C."/>
            <person name="Glavina T."/>
            <person name="Hammon N."/>
            <person name="Israni S."/>
            <person name="Pitluck S."/>
            <person name="Schmutz J."/>
            <person name="Martinez M."/>
            <person name="Larimer F."/>
            <person name="Land M."/>
            <person name="Kyrpides N."/>
            <person name="Ivanova N."/>
            <person name="Richardson P."/>
        </authorList>
    </citation>
    <scope>NUCLEOTIDE SEQUENCE [LARGE SCALE GENOMIC DNA]</scope>
    <source>
        <strain>CC9605</strain>
    </source>
</reference>
<keyword id="KW-0169">Cobalamin biosynthesis</keyword>
<keyword id="KW-0315">Glutamine amidotransferase</keyword>
<proteinExistence type="inferred from homology"/>
<feature type="chain" id="PRO_0000332392" description="Cobyric acid synthase">
    <location>
        <begin position="1"/>
        <end position="498"/>
    </location>
</feature>
<feature type="domain" description="GATase cobBQ-type" evidence="1">
    <location>
        <begin position="257"/>
        <end position="447"/>
    </location>
</feature>
<feature type="active site" description="Nucleophile" evidence="1">
    <location>
        <position position="338"/>
    </location>
</feature>
<feature type="active site" evidence="1">
    <location>
        <position position="439"/>
    </location>
</feature>
<organism>
    <name type="scientific">Synechococcus sp. (strain CC9605)</name>
    <dbReference type="NCBI Taxonomy" id="110662"/>
    <lineage>
        <taxon>Bacteria</taxon>
        <taxon>Bacillati</taxon>
        <taxon>Cyanobacteriota</taxon>
        <taxon>Cyanophyceae</taxon>
        <taxon>Synechococcales</taxon>
        <taxon>Synechococcaceae</taxon>
        <taxon>Synechococcus</taxon>
    </lineage>
</organism>
<dbReference type="EMBL" id="CP000110">
    <property type="protein sequence ID" value="ABB34535.1"/>
    <property type="molecule type" value="Genomic_DNA"/>
</dbReference>
<dbReference type="SMR" id="Q3ALJ7"/>
<dbReference type="STRING" id="110662.Syncc9605_0766"/>
<dbReference type="KEGG" id="syd:Syncc9605_0766"/>
<dbReference type="eggNOG" id="COG1492">
    <property type="taxonomic scope" value="Bacteria"/>
</dbReference>
<dbReference type="HOGENOM" id="CLU_019250_2_2_3"/>
<dbReference type="OrthoDB" id="9808302at2"/>
<dbReference type="UniPathway" id="UPA00148"/>
<dbReference type="GO" id="GO:0015420">
    <property type="term" value="F:ABC-type vitamin B12 transporter activity"/>
    <property type="evidence" value="ECO:0007669"/>
    <property type="project" value="UniProtKB-UniRule"/>
</dbReference>
<dbReference type="GO" id="GO:0003824">
    <property type="term" value="F:catalytic activity"/>
    <property type="evidence" value="ECO:0007669"/>
    <property type="project" value="InterPro"/>
</dbReference>
<dbReference type="GO" id="GO:0009236">
    <property type="term" value="P:cobalamin biosynthetic process"/>
    <property type="evidence" value="ECO:0007669"/>
    <property type="project" value="UniProtKB-UniRule"/>
</dbReference>
<dbReference type="CDD" id="cd01750">
    <property type="entry name" value="GATase1_CobQ"/>
    <property type="match status" value="1"/>
</dbReference>
<dbReference type="Gene3D" id="3.40.50.880">
    <property type="match status" value="1"/>
</dbReference>
<dbReference type="Gene3D" id="3.40.50.300">
    <property type="entry name" value="P-loop containing nucleotide triphosphate hydrolases"/>
    <property type="match status" value="1"/>
</dbReference>
<dbReference type="HAMAP" id="MF_00028">
    <property type="entry name" value="CobQ"/>
    <property type="match status" value="1"/>
</dbReference>
<dbReference type="InterPro" id="IPR029062">
    <property type="entry name" value="Class_I_gatase-like"/>
</dbReference>
<dbReference type="InterPro" id="IPR002586">
    <property type="entry name" value="CobQ/CobB/MinD/ParA_Nub-bd_dom"/>
</dbReference>
<dbReference type="InterPro" id="IPR033949">
    <property type="entry name" value="CobQ_GATase1"/>
</dbReference>
<dbReference type="InterPro" id="IPR004459">
    <property type="entry name" value="CobQ_synth"/>
</dbReference>
<dbReference type="InterPro" id="IPR011698">
    <property type="entry name" value="GATase_3"/>
</dbReference>
<dbReference type="InterPro" id="IPR027417">
    <property type="entry name" value="P-loop_NTPase"/>
</dbReference>
<dbReference type="NCBIfam" id="TIGR00313">
    <property type="entry name" value="cobQ"/>
    <property type="match status" value="1"/>
</dbReference>
<dbReference type="NCBIfam" id="NF001989">
    <property type="entry name" value="PRK00784.1"/>
    <property type="match status" value="1"/>
</dbReference>
<dbReference type="PANTHER" id="PTHR21343:SF1">
    <property type="entry name" value="COBYRIC ACID SYNTHASE"/>
    <property type="match status" value="1"/>
</dbReference>
<dbReference type="PANTHER" id="PTHR21343">
    <property type="entry name" value="DETHIOBIOTIN SYNTHETASE"/>
    <property type="match status" value="1"/>
</dbReference>
<dbReference type="Pfam" id="PF01656">
    <property type="entry name" value="CbiA"/>
    <property type="match status" value="1"/>
</dbReference>
<dbReference type="Pfam" id="PF07685">
    <property type="entry name" value="GATase_3"/>
    <property type="match status" value="1"/>
</dbReference>
<dbReference type="SUPFAM" id="SSF52317">
    <property type="entry name" value="Class I glutamine amidotransferase-like"/>
    <property type="match status" value="1"/>
</dbReference>
<dbReference type="SUPFAM" id="SSF52540">
    <property type="entry name" value="P-loop containing nucleoside triphosphate hydrolases"/>
    <property type="match status" value="1"/>
</dbReference>
<dbReference type="PROSITE" id="PS51274">
    <property type="entry name" value="GATASE_COBBQ"/>
    <property type="match status" value="1"/>
</dbReference>